<feature type="chain" id="PRO_0000345436" description="Small ribosomal subunit protein bS18">
    <location>
        <begin position="1"/>
        <end position="135"/>
    </location>
</feature>
<feature type="region of interest" description="Disordered" evidence="2">
    <location>
        <begin position="1"/>
        <end position="65"/>
    </location>
</feature>
<feature type="compositionally biased region" description="Gly residues" evidence="2">
    <location>
        <begin position="9"/>
        <end position="41"/>
    </location>
</feature>
<feature type="compositionally biased region" description="Basic and acidic residues" evidence="2">
    <location>
        <begin position="42"/>
        <end position="61"/>
    </location>
</feature>
<name>RS18_ANADE</name>
<evidence type="ECO:0000255" key="1">
    <source>
        <dbReference type="HAMAP-Rule" id="MF_00270"/>
    </source>
</evidence>
<evidence type="ECO:0000256" key="2">
    <source>
        <dbReference type="SAM" id="MobiDB-lite"/>
    </source>
</evidence>
<evidence type="ECO:0000305" key="3"/>
<organism>
    <name type="scientific">Anaeromyxobacter dehalogenans (strain 2CP-C)</name>
    <dbReference type="NCBI Taxonomy" id="290397"/>
    <lineage>
        <taxon>Bacteria</taxon>
        <taxon>Pseudomonadati</taxon>
        <taxon>Myxococcota</taxon>
        <taxon>Myxococcia</taxon>
        <taxon>Myxococcales</taxon>
        <taxon>Cystobacterineae</taxon>
        <taxon>Anaeromyxobacteraceae</taxon>
        <taxon>Anaeromyxobacter</taxon>
    </lineage>
</organism>
<accession>Q2IM64</accession>
<gene>
    <name evidence="1" type="primary">rpsR</name>
    <name type="ordered locus">Adeh_0117</name>
</gene>
<sequence length="135" mass="14089">MARPDMGGPKMGGGFGGPRSGGFGGGGGGGGFGGGGFGGGRGGDRGDRGDRDDRGGDEGGGRRGFGRRKVCRFCADKTLKVDYKDQGQMKYFLTERGKIIPRRISGNCAKHQREVATAIKRGRMLAILPYTVGQM</sequence>
<keyword id="KW-1185">Reference proteome</keyword>
<keyword id="KW-0687">Ribonucleoprotein</keyword>
<keyword id="KW-0689">Ribosomal protein</keyword>
<keyword id="KW-0694">RNA-binding</keyword>
<keyword id="KW-0699">rRNA-binding</keyword>
<reference key="1">
    <citation type="submission" date="2006-01" db="EMBL/GenBank/DDBJ databases">
        <title>Complete sequence of Anaeromyxobacter dehalogenans 2CP-C.</title>
        <authorList>
            <person name="Copeland A."/>
            <person name="Lucas S."/>
            <person name="Lapidus A."/>
            <person name="Barry K."/>
            <person name="Detter J.C."/>
            <person name="Glavina T."/>
            <person name="Hammon N."/>
            <person name="Israni S."/>
            <person name="Pitluck S."/>
            <person name="Brettin T."/>
            <person name="Bruce D."/>
            <person name="Han C."/>
            <person name="Tapia R."/>
            <person name="Gilna P."/>
            <person name="Kiss H."/>
            <person name="Schmutz J."/>
            <person name="Larimer F."/>
            <person name="Land M."/>
            <person name="Kyrpides N."/>
            <person name="Anderson I."/>
            <person name="Sanford R.A."/>
            <person name="Ritalahti K.M."/>
            <person name="Thomas H.S."/>
            <person name="Kirby J.R."/>
            <person name="Zhulin I.B."/>
            <person name="Loeffler F.E."/>
            <person name="Richardson P."/>
        </authorList>
    </citation>
    <scope>NUCLEOTIDE SEQUENCE [LARGE SCALE GENOMIC DNA]</scope>
    <source>
        <strain>2CP-C</strain>
    </source>
</reference>
<comment type="function">
    <text evidence="1">Binds as a heterodimer with protein bS6 to the central domain of the 16S rRNA, where it helps stabilize the platform of the 30S subunit.</text>
</comment>
<comment type="subunit">
    <text evidence="1">Part of the 30S ribosomal subunit. Forms a tight heterodimer with protein bS6.</text>
</comment>
<comment type="similarity">
    <text evidence="1">Belongs to the bacterial ribosomal protein bS18 family.</text>
</comment>
<dbReference type="EMBL" id="CP000251">
    <property type="protein sequence ID" value="ABC79894.1"/>
    <property type="molecule type" value="Genomic_DNA"/>
</dbReference>
<dbReference type="RefSeq" id="WP_011419177.1">
    <property type="nucleotide sequence ID" value="NC_007760.1"/>
</dbReference>
<dbReference type="SMR" id="Q2IM64"/>
<dbReference type="STRING" id="290397.Adeh_0117"/>
<dbReference type="KEGG" id="ade:Adeh_0117"/>
<dbReference type="eggNOG" id="COG0238">
    <property type="taxonomic scope" value="Bacteria"/>
</dbReference>
<dbReference type="HOGENOM" id="CLU_148710_0_2_7"/>
<dbReference type="OrthoDB" id="9812008at2"/>
<dbReference type="Proteomes" id="UP000001935">
    <property type="component" value="Chromosome"/>
</dbReference>
<dbReference type="GO" id="GO:0022627">
    <property type="term" value="C:cytosolic small ribosomal subunit"/>
    <property type="evidence" value="ECO:0007669"/>
    <property type="project" value="TreeGrafter"/>
</dbReference>
<dbReference type="GO" id="GO:0070181">
    <property type="term" value="F:small ribosomal subunit rRNA binding"/>
    <property type="evidence" value="ECO:0007669"/>
    <property type="project" value="TreeGrafter"/>
</dbReference>
<dbReference type="GO" id="GO:0003735">
    <property type="term" value="F:structural constituent of ribosome"/>
    <property type="evidence" value="ECO:0007669"/>
    <property type="project" value="InterPro"/>
</dbReference>
<dbReference type="GO" id="GO:0006412">
    <property type="term" value="P:translation"/>
    <property type="evidence" value="ECO:0007669"/>
    <property type="project" value="UniProtKB-UniRule"/>
</dbReference>
<dbReference type="Gene3D" id="4.10.640.10">
    <property type="entry name" value="Ribosomal protein S18"/>
    <property type="match status" value="1"/>
</dbReference>
<dbReference type="HAMAP" id="MF_00270">
    <property type="entry name" value="Ribosomal_bS18"/>
    <property type="match status" value="1"/>
</dbReference>
<dbReference type="InterPro" id="IPR001648">
    <property type="entry name" value="Ribosomal_bS18"/>
</dbReference>
<dbReference type="InterPro" id="IPR036870">
    <property type="entry name" value="Ribosomal_bS18_sf"/>
</dbReference>
<dbReference type="NCBIfam" id="TIGR00165">
    <property type="entry name" value="S18"/>
    <property type="match status" value="1"/>
</dbReference>
<dbReference type="PANTHER" id="PTHR13479">
    <property type="entry name" value="30S RIBOSOMAL PROTEIN S18"/>
    <property type="match status" value="1"/>
</dbReference>
<dbReference type="PANTHER" id="PTHR13479:SF40">
    <property type="entry name" value="SMALL RIBOSOMAL SUBUNIT PROTEIN BS18M"/>
    <property type="match status" value="1"/>
</dbReference>
<dbReference type="Pfam" id="PF01084">
    <property type="entry name" value="Ribosomal_S18"/>
    <property type="match status" value="1"/>
</dbReference>
<dbReference type="PRINTS" id="PR00974">
    <property type="entry name" value="RIBOSOMALS18"/>
</dbReference>
<dbReference type="SUPFAM" id="SSF46911">
    <property type="entry name" value="Ribosomal protein S18"/>
    <property type="match status" value="1"/>
</dbReference>
<proteinExistence type="inferred from homology"/>
<protein>
    <recommendedName>
        <fullName evidence="1">Small ribosomal subunit protein bS18</fullName>
    </recommendedName>
    <alternativeName>
        <fullName evidence="3">30S ribosomal protein S18</fullName>
    </alternativeName>
</protein>